<name>GSA_PROMT</name>
<sequence length="432" mass="46242">MTDALNTKRSEEIFGAAKNLMPGGVSSPVRAFKSVEGDPIVFDRVKGPYAWDVDGNRYIDYVGSWGPAICGHAHPEVIAALQETLEKGTSFGAPCVLENQLAEMVIDAVPSVEMVRFVNSGTEACMAVLRLMRAFTGRDKVIKFEGCYHGHADMFLVKAGSGVATLGLPDSPGVPRSTTANTLTAPYNDLEAVKELFAENPDAISGVILEPVVGNAGFITPEPGFLEGLREVTQENGALLVFDEVMTGFRISYGGAQERFGVTPDLTTMGKVIGGGLPVGAYGGRKEIMSMVSPSGPMYQAGTLSGNPLAMTAGIKTLELLKQEGTYEKLEAITKKLLDGILTAAKESNIPIYGQSISAMFGFYLCEGPVRNFEEAKSSDTELFSKIHRLMLQKGVYLAPSAFEAGFTSLAHSEDDINATIKAFKEIFSEMS</sequence>
<dbReference type="EC" id="5.4.3.8" evidence="1"/>
<dbReference type="EMBL" id="CP000095">
    <property type="protein sequence ID" value="AAZ59304.1"/>
    <property type="molecule type" value="Genomic_DNA"/>
</dbReference>
<dbReference type="SMR" id="Q46GT9"/>
<dbReference type="STRING" id="59920.PMN2A_1816"/>
<dbReference type="KEGG" id="pmn:PMN2A_1816"/>
<dbReference type="HOGENOM" id="CLU_016922_1_5_3"/>
<dbReference type="OrthoDB" id="9807885at2"/>
<dbReference type="PhylomeDB" id="Q46GT9"/>
<dbReference type="UniPathway" id="UPA00251">
    <property type="reaction ID" value="UER00317"/>
</dbReference>
<dbReference type="UniPathway" id="UPA00668"/>
<dbReference type="Proteomes" id="UP000002535">
    <property type="component" value="Chromosome"/>
</dbReference>
<dbReference type="GO" id="GO:0005737">
    <property type="term" value="C:cytoplasm"/>
    <property type="evidence" value="ECO:0007669"/>
    <property type="project" value="UniProtKB-SubCell"/>
</dbReference>
<dbReference type="GO" id="GO:0042286">
    <property type="term" value="F:glutamate-1-semialdehyde 2,1-aminomutase activity"/>
    <property type="evidence" value="ECO:0007669"/>
    <property type="project" value="UniProtKB-UniRule"/>
</dbReference>
<dbReference type="GO" id="GO:0030170">
    <property type="term" value="F:pyridoxal phosphate binding"/>
    <property type="evidence" value="ECO:0007669"/>
    <property type="project" value="InterPro"/>
</dbReference>
<dbReference type="GO" id="GO:0008483">
    <property type="term" value="F:transaminase activity"/>
    <property type="evidence" value="ECO:0007669"/>
    <property type="project" value="InterPro"/>
</dbReference>
<dbReference type="GO" id="GO:0015995">
    <property type="term" value="P:chlorophyll biosynthetic process"/>
    <property type="evidence" value="ECO:0007669"/>
    <property type="project" value="UniProtKB-UniRule"/>
</dbReference>
<dbReference type="GO" id="GO:0006782">
    <property type="term" value="P:protoporphyrinogen IX biosynthetic process"/>
    <property type="evidence" value="ECO:0007669"/>
    <property type="project" value="UniProtKB-UniRule"/>
</dbReference>
<dbReference type="CDD" id="cd00610">
    <property type="entry name" value="OAT_like"/>
    <property type="match status" value="1"/>
</dbReference>
<dbReference type="FunFam" id="3.40.640.10:FF:000021">
    <property type="entry name" value="Glutamate-1-semialdehyde 2,1-aminomutase"/>
    <property type="match status" value="1"/>
</dbReference>
<dbReference type="Gene3D" id="3.90.1150.10">
    <property type="entry name" value="Aspartate Aminotransferase, domain 1"/>
    <property type="match status" value="1"/>
</dbReference>
<dbReference type="Gene3D" id="3.40.640.10">
    <property type="entry name" value="Type I PLP-dependent aspartate aminotransferase-like (Major domain)"/>
    <property type="match status" value="1"/>
</dbReference>
<dbReference type="HAMAP" id="MF_00375">
    <property type="entry name" value="HemL_aminotrans_3"/>
    <property type="match status" value="1"/>
</dbReference>
<dbReference type="InterPro" id="IPR004639">
    <property type="entry name" value="4pyrrol_synth_GluAld_NH2Trfase"/>
</dbReference>
<dbReference type="InterPro" id="IPR005814">
    <property type="entry name" value="Aminotrans_3"/>
</dbReference>
<dbReference type="InterPro" id="IPR049704">
    <property type="entry name" value="Aminotrans_3_PPA_site"/>
</dbReference>
<dbReference type="InterPro" id="IPR015424">
    <property type="entry name" value="PyrdxlP-dep_Trfase"/>
</dbReference>
<dbReference type="InterPro" id="IPR015421">
    <property type="entry name" value="PyrdxlP-dep_Trfase_major"/>
</dbReference>
<dbReference type="InterPro" id="IPR015422">
    <property type="entry name" value="PyrdxlP-dep_Trfase_small"/>
</dbReference>
<dbReference type="NCBIfam" id="TIGR00713">
    <property type="entry name" value="hemL"/>
    <property type="match status" value="1"/>
</dbReference>
<dbReference type="NCBIfam" id="NF000818">
    <property type="entry name" value="PRK00062.1"/>
    <property type="match status" value="1"/>
</dbReference>
<dbReference type="PANTHER" id="PTHR43713">
    <property type="entry name" value="GLUTAMATE-1-SEMIALDEHYDE 2,1-AMINOMUTASE"/>
    <property type="match status" value="1"/>
</dbReference>
<dbReference type="PANTHER" id="PTHR43713:SF3">
    <property type="entry name" value="GLUTAMATE-1-SEMIALDEHYDE 2,1-AMINOMUTASE 1, CHLOROPLASTIC-RELATED"/>
    <property type="match status" value="1"/>
</dbReference>
<dbReference type="Pfam" id="PF00202">
    <property type="entry name" value="Aminotran_3"/>
    <property type="match status" value="1"/>
</dbReference>
<dbReference type="SUPFAM" id="SSF53383">
    <property type="entry name" value="PLP-dependent transferases"/>
    <property type="match status" value="1"/>
</dbReference>
<dbReference type="PROSITE" id="PS00600">
    <property type="entry name" value="AA_TRANSFER_CLASS_3"/>
    <property type="match status" value="1"/>
</dbReference>
<accession>Q46GT9</accession>
<organism>
    <name type="scientific">Prochlorococcus marinus (strain NATL2A)</name>
    <dbReference type="NCBI Taxonomy" id="59920"/>
    <lineage>
        <taxon>Bacteria</taxon>
        <taxon>Bacillati</taxon>
        <taxon>Cyanobacteriota</taxon>
        <taxon>Cyanophyceae</taxon>
        <taxon>Synechococcales</taxon>
        <taxon>Prochlorococcaceae</taxon>
        <taxon>Prochlorococcus</taxon>
    </lineage>
</organism>
<reference key="1">
    <citation type="journal article" date="2007" name="PLoS Genet.">
        <title>Patterns and implications of gene gain and loss in the evolution of Prochlorococcus.</title>
        <authorList>
            <person name="Kettler G.C."/>
            <person name="Martiny A.C."/>
            <person name="Huang K."/>
            <person name="Zucker J."/>
            <person name="Coleman M.L."/>
            <person name="Rodrigue S."/>
            <person name="Chen F."/>
            <person name="Lapidus A."/>
            <person name="Ferriera S."/>
            <person name="Johnson J."/>
            <person name="Steglich C."/>
            <person name="Church G.M."/>
            <person name="Richardson P."/>
            <person name="Chisholm S.W."/>
        </authorList>
    </citation>
    <scope>NUCLEOTIDE SEQUENCE [LARGE SCALE GENOMIC DNA]</scope>
    <source>
        <strain>NATL2A</strain>
    </source>
</reference>
<feature type="chain" id="PRO_0000243599" description="Glutamate-1-semialdehyde 2,1-aminomutase">
    <location>
        <begin position="1"/>
        <end position="432"/>
    </location>
</feature>
<feature type="modified residue" description="N6-(pyridoxal phosphate)lysine" evidence="1">
    <location>
        <position position="271"/>
    </location>
</feature>
<protein>
    <recommendedName>
        <fullName evidence="1">Glutamate-1-semialdehyde 2,1-aminomutase</fullName>
        <shortName evidence="1">GSA</shortName>
        <ecNumber evidence="1">5.4.3.8</ecNumber>
    </recommendedName>
    <alternativeName>
        <fullName evidence="1">Glutamate-1-semialdehyde aminotransferase</fullName>
        <shortName evidence="1">GSA-AT</shortName>
    </alternativeName>
</protein>
<evidence type="ECO:0000255" key="1">
    <source>
        <dbReference type="HAMAP-Rule" id="MF_00375"/>
    </source>
</evidence>
<gene>
    <name evidence="1" type="primary">hemL</name>
    <name type="ordered locus">PMN2A_1816</name>
</gene>
<proteinExistence type="inferred from homology"/>
<comment type="catalytic activity">
    <reaction evidence="1">
        <text>(S)-4-amino-5-oxopentanoate = 5-aminolevulinate</text>
        <dbReference type="Rhea" id="RHEA:14265"/>
        <dbReference type="ChEBI" id="CHEBI:57501"/>
        <dbReference type="ChEBI" id="CHEBI:356416"/>
        <dbReference type="EC" id="5.4.3.8"/>
    </reaction>
</comment>
<comment type="cofactor">
    <cofactor evidence="1">
        <name>pyridoxal 5'-phosphate</name>
        <dbReference type="ChEBI" id="CHEBI:597326"/>
    </cofactor>
</comment>
<comment type="pathway">
    <text evidence="1">Porphyrin-containing compound metabolism; protoporphyrin-IX biosynthesis; 5-aminolevulinate from L-glutamyl-tRNA(Glu): step 2/2.</text>
</comment>
<comment type="pathway">
    <text evidence="1">Porphyrin-containing compound metabolism; chlorophyll biosynthesis.</text>
</comment>
<comment type="subunit">
    <text evidence="1">Homodimer.</text>
</comment>
<comment type="subcellular location">
    <subcellularLocation>
        <location evidence="1">Cytoplasm</location>
    </subcellularLocation>
</comment>
<comment type="similarity">
    <text evidence="1">Belongs to the class-III pyridoxal-phosphate-dependent aminotransferase family. HemL subfamily.</text>
</comment>
<keyword id="KW-0149">Chlorophyll biosynthesis</keyword>
<keyword id="KW-0963">Cytoplasm</keyword>
<keyword id="KW-0413">Isomerase</keyword>
<keyword id="KW-0627">Porphyrin biosynthesis</keyword>
<keyword id="KW-0663">Pyridoxal phosphate</keyword>
<keyword id="KW-1185">Reference proteome</keyword>